<evidence type="ECO:0000250" key="1"/>
<evidence type="ECO:0000305" key="2"/>
<comment type="function">
    <text evidence="1">Cell division inhibitor that blocks the formation of polar Z ring septums. Rapidly oscillates between the poles of the cell to destabilize FtsZ filaments that have formed before they mature into polar Z rings. Prevents FtsZ polymerization (By similarity).</text>
</comment>
<comment type="subunit">
    <text evidence="1">Interacts with MinD and FtsZ.</text>
</comment>
<comment type="similarity">
    <text evidence="2">Belongs to the MinC family.</text>
</comment>
<dbReference type="EMBL" id="AE009951">
    <property type="protein sequence ID" value="AAL94381.1"/>
    <property type="molecule type" value="Genomic_DNA"/>
</dbReference>
<dbReference type="RefSeq" id="NP_603082.1">
    <property type="nucleotide sequence ID" value="NC_003454.1"/>
</dbReference>
<dbReference type="RefSeq" id="WP_005902702.1">
    <property type="nucleotide sequence ID" value="NZ_OZ209243.1"/>
</dbReference>
<dbReference type="SMR" id="Q8RGV2"/>
<dbReference type="FunCoup" id="Q8RGV2">
    <property type="interactions" value="15"/>
</dbReference>
<dbReference type="STRING" id="190304.FN0175"/>
<dbReference type="PaxDb" id="190304-FN0175"/>
<dbReference type="DNASU" id="992955"/>
<dbReference type="EnsemblBacteria" id="AAL94381">
    <property type="protein sequence ID" value="AAL94381"/>
    <property type="gene ID" value="FN0175"/>
</dbReference>
<dbReference type="GeneID" id="79783193"/>
<dbReference type="KEGG" id="fnu:FN0175"/>
<dbReference type="PATRIC" id="fig|190304.8.peg.756"/>
<dbReference type="eggNOG" id="COG0850">
    <property type="taxonomic scope" value="Bacteria"/>
</dbReference>
<dbReference type="HOGENOM" id="CLU_048711_2_2_0"/>
<dbReference type="InParanoid" id="Q8RGV2"/>
<dbReference type="BioCyc" id="FNUC190304:G1FZS-777-MONOMER"/>
<dbReference type="Proteomes" id="UP000002521">
    <property type="component" value="Chromosome"/>
</dbReference>
<dbReference type="GO" id="GO:0000902">
    <property type="term" value="P:cell morphogenesis"/>
    <property type="evidence" value="ECO:0007669"/>
    <property type="project" value="InterPro"/>
</dbReference>
<dbReference type="GO" id="GO:0000917">
    <property type="term" value="P:division septum assembly"/>
    <property type="evidence" value="ECO:0007669"/>
    <property type="project" value="UniProtKB-KW"/>
</dbReference>
<dbReference type="GO" id="GO:1901891">
    <property type="term" value="P:regulation of cell septum assembly"/>
    <property type="evidence" value="ECO:0007669"/>
    <property type="project" value="InterPro"/>
</dbReference>
<dbReference type="Gene3D" id="2.160.20.70">
    <property type="match status" value="1"/>
</dbReference>
<dbReference type="Gene3D" id="3.30.160.540">
    <property type="match status" value="1"/>
</dbReference>
<dbReference type="HAMAP" id="MF_00267">
    <property type="entry name" value="MinC"/>
    <property type="match status" value="1"/>
</dbReference>
<dbReference type="InterPro" id="IPR016098">
    <property type="entry name" value="CAP/MinC_C"/>
</dbReference>
<dbReference type="InterPro" id="IPR013033">
    <property type="entry name" value="MinC"/>
</dbReference>
<dbReference type="InterPro" id="IPR036145">
    <property type="entry name" value="MinC_C_sf"/>
</dbReference>
<dbReference type="InterPro" id="IPR055219">
    <property type="entry name" value="MinC_N_1"/>
</dbReference>
<dbReference type="InterPro" id="IPR005526">
    <property type="entry name" value="Septum_form_inhib_MinC_C"/>
</dbReference>
<dbReference type="PANTHER" id="PTHR34108">
    <property type="entry name" value="SEPTUM SITE-DETERMINING PROTEIN MINC"/>
    <property type="match status" value="1"/>
</dbReference>
<dbReference type="PANTHER" id="PTHR34108:SF1">
    <property type="entry name" value="SEPTUM SITE-DETERMINING PROTEIN MINC"/>
    <property type="match status" value="1"/>
</dbReference>
<dbReference type="Pfam" id="PF03775">
    <property type="entry name" value="MinC_C"/>
    <property type="match status" value="1"/>
</dbReference>
<dbReference type="Pfam" id="PF22642">
    <property type="entry name" value="MinC_N_1"/>
    <property type="match status" value="1"/>
</dbReference>
<dbReference type="SUPFAM" id="SSF63848">
    <property type="entry name" value="Cell-division inhibitor MinC, C-terminal domain"/>
    <property type="match status" value="1"/>
</dbReference>
<sequence length="216" mass="23821">MSNHVIIKGKNDRLVIALDPNIDFLDICDILKTKILEAKDFIGNSRMAIEFSGRALTNEEENKLIGIITDNSDIVVSYIFSKRAESEEENIDLNSLNPLIEEGKTHFFRGTLRSGSKIESDGNVVVLGDVNPSSMIRARGNVIVLGHLNGTVCAGLGGDDRAFIAAIYFNPIQITIGMKTITDIQDEILDSTRVDKKSKFKVASIKNQEIVVEELI</sequence>
<protein>
    <recommendedName>
        <fullName>Probable septum site-determining protein MinC</fullName>
    </recommendedName>
</protein>
<feature type="chain" id="PRO_0000189036" description="Probable septum site-determining protein MinC">
    <location>
        <begin position="1"/>
        <end position="216"/>
    </location>
</feature>
<keyword id="KW-0131">Cell cycle</keyword>
<keyword id="KW-0132">Cell division</keyword>
<keyword id="KW-1185">Reference proteome</keyword>
<keyword id="KW-0717">Septation</keyword>
<accession>Q8RGV2</accession>
<proteinExistence type="inferred from homology"/>
<reference key="1">
    <citation type="journal article" date="2002" name="J. Bacteriol.">
        <title>Genome sequence and analysis of the oral bacterium Fusobacterium nucleatum strain ATCC 25586.</title>
        <authorList>
            <person name="Kapatral V."/>
            <person name="Anderson I."/>
            <person name="Ivanova N."/>
            <person name="Reznik G."/>
            <person name="Los T."/>
            <person name="Lykidis A."/>
            <person name="Bhattacharyya A."/>
            <person name="Bartman A."/>
            <person name="Gardner W."/>
            <person name="Grechkin G."/>
            <person name="Zhu L."/>
            <person name="Vasieva O."/>
            <person name="Chu L."/>
            <person name="Kogan Y."/>
            <person name="Chaga O."/>
            <person name="Goltsman E."/>
            <person name="Bernal A."/>
            <person name="Larsen N."/>
            <person name="D'Souza M."/>
            <person name="Walunas T."/>
            <person name="Pusch G."/>
            <person name="Haselkorn R."/>
            <person name="Fonstein M."/>
            <person name="Kyrpides N.C."/>
            <person name="Overbeek R."/>
        </authorList>
    </citation>
    <scope>NUCLEOTIDE SEQUENCE [LARGE SCALE GENOMIC DNA]</scope>
    <source>
        <strain>ATCC 25586 / DSM 15643 / BCRC 10681 / CIP 101130 / JCM 8532 / KCTC 2640 / LMG 13131 / VPI 4355</strain>
    </source>
</reference>
<name>MINC_FUSNN</name>
<gene>
    <name type="primary">minC</name>
    <name type="ordered locus">FN0175</name>
</gene>
<organism>
    <name type="scientific">Fusobacterium nucleatum subsp. nucleatum (strain ATCC 25586 / DSM 15643 / BCRC 10681 / CIP 101130 / JCM 8532 / KCTC 2640 / LMG 13131 / VPI 4355)</name>
    <dbReference type="NCBI Taxonomy" id="190304"/>
    <lineage>
        <taxon>Bacteria</taxon>
        <taxon>Fusobacteriati</taxon>
        <taxon>Fusobacteriota</taxon>
        <taxon>Fusobacteriia</taxon>
        <taxon>Fusobacteriales</taxon>
        <taxon>Fusobacteriaceae</taxon>
        <taxon>Fusobacterium</taxon>
    </lineage>
</organism>